<dbReference type="EC" id="4.1.1.37" evidence="1"/>
<dbReference type="EMBL" id="CP001050">
    <property type="protein sequence ID" value="ACF29210.1"/>
    <property type="molecule type" value="Genomic_DNA"/>
</dbReference>
<dbReference type="RefSeq" id="WP_003692759.1">
    <property type="nucleotide sequence ID" value="NC_011035.1"/>
</dbReference>
<dbReference type="SMR" id="B4RK59"/>
<dbReference type="KEGG" id="ngk:NGK_0519"/>
<dbReference type="HOGENOM" id="CLU_040933_0_0_4"/>
<dbReference type="UniPathway" id="UPA00251">
    <property type="reaction ID" value="UER00321"/>
</dbReference>
<dbReference type="Proteomes" id="UP000002564">
    <property type="component" value="Chromosome"/>
</dbReference>
<dbReference type="GO" id="GO:0005829">
    <property type="term" value="C:cytosol"/>
    <property type="evidence" value="ECO:0007669"/>
    <property type="project" value="TreeGrafter"/>
</dbReference>
<dbReference type="GO" id="GO:0004853">
    <property type="term" value="F:uroporphyrinogen decarboxylase activity"/>
    <property type="evidence" value="ECO:0007669"/>
    <property type="project" value="UniProtKB-UniRule"/>
</dbReference>
<dbReference type="GO" id="GO:0019353">
    <property type="term" value="P:protoporphyrinogen IX biosynthetic process from glutamate"/>
    <property type="evidence" value="ECO:0007669"/>
    <property type="project" value="TreeGrafter"/>
</dbReference>
<dbReference type="CDD" id="cd00717">
    <property type="entry name" value="URO-D"/>
    <property type="match status" value="1"/>
</dbReference>
<dbReference type="FunFam" id="3.20.20.210:FF:000001">
    <property type="entry name" value="Uroporphyrinogen decarboxylase"/>
    <property type="match status" value="1"/>
</dbReference>
<dbReference type="Gene3D" id="3.20.20.210">
    <property type="match status" value="1"/>
</dbReference>
<dbReference type="HAMAP" id="MF_00218">
    <property type="entry name" value="URO_D"/>
    <property type="match status" value="1"/>
</dbReference>
<dbReference type="InterPro" id="IPR038071">
    <property type="entry name" value="UROD/MetE-like_sf"/>
</dbReference>
<dbReference type="InterPro" id="IPR006361">
    <property type="entry name" value="Uroporphyrinogen_deCO2ase_HemE"/>
</dbReference>
<dbReference type="InterPro" id="IPR000257">
    <property type="entry name" value="Uroporphyrinogen_deCOase"/>
</dbReference>
<dbReference type="NCBIfam" id="TIGR01464">
    <property type="entry name" value="hemE"/>
    <property type="match status" value="1"/>
</dbReference>
<dbReference type="PANTHER" id="PTHR21091">
    <property type="entry name" value="METHYLTETRAHYDROFOLATE:HOMOCYSTEINE METHYLTRANSFERASE RELATED"/>
    <property type="match status" value="1"/>
</dbReference>
<dbReference type="PANTHER" id="PTHR21091:SF169">
    <property type="entry name" value="UROPORPHYRINOGEN DECARBOXYLASE"/>
    <property type="match status" value="1"/>
</dbReference>
<dbReference type="Pfam" id="PF01208">
    <property type="entry name" value="URO-D"/>
    <property type="match status" value="1"/>
</dbReference>
<dbReference type="SUPFAM" id="SSF51726">
    <property type="entry name" value="UROD/MetE-like"/>
    <property type="match status" value="1"/>
</dbReference>
<dbReference type="PROSITE" id="PS00906">
    <property type="entry name" value="UROD_1"/>
    <property type="match status" value="1"/>
</dbReference>
<dbReference type="PROSITE" id="PS00907">
    <property type="entry name" value="UROD_2"/>
    <property type="match status" value="1"/>
</dbReference>
<reference key="1">
    <citation type="journal article" date="2008" name="J. Bacteriol.">
        <title>Complete genome sequence of Neisseria gonorrhoeae NCCP11945.</title>
        <authorList>
            <person name="Chung G.T."/>
            <person name="Yoo J.S."/>
            <person name="Oh H.B."/>
            <person name="Lee Y.S."/>
            <person name="Cha S.H."/>
            <person name="Kim S.J."/>
            <person name="Yoo C.K."/>
        </authorList>
    </citation>
    <scope>NUCLEOTIDE SEQUENCE [LARGE SCALE GENOMIC DNA]</scope>
    <source>
        <strain>NCCP11945</strain>
    </source>
</reference>
<organism>
    <name type="scientific">Neisseria gonorrhoeae (strain NCCP11945)</name>
    <dbReference type="NCBI Taxonomy" id="521006"/>
    <lineage>
        <taxon>Bacteria</taxon>
        <taxon>Pseudomonadati</taxon>
        <taxon>Pseudomonadota</taxon>
        <taxon>Betaproteobacteria</taxon>
        <taxon>Neisseriales</taxon>
        <taxon>Neisseriaceae</taxon>
        <taxon>Neisseria</taxon>
    </lineage>
</organism>
<evidence type="ECO:0000255" key="1">
    <source>
        <dbReference type="HAMAP-Rule" id="MF_00218"/>
    </source>
</evidence>
<accession>B4RK59</accession>
<proteinExistence type="inferred from homology"/>
<name>DCUP_NEIG2</name>
<sequence>MTLLKNDTFLRALLKQPVEYTPIWMMRQAGRYLPEYKATRAKAGSFLDLCKNTGLATEVTIQPLERFDLDAAILFSDILTVPDAMGLGLYFAEGEGPKFAHALQHESDIAKLHVPDMEKLQYVFDAVTSIRKALDGRVPLIGFSGSPFTLACYMVEGGGSKEFRTIKTMMYSRPDLLYKILDTNAQAVTAYLNAQIDAGAQAVQIFDTWGGVLSDAAFKEFSLKYIRQIVAGLKRESEGRRVPVIVFAKGGGLWLESMVQIGADALGLDWTCNIGEARRRVGNQVALQGNFDPSALFGTPESIRTEVARILTGYGHGSGHVFNLGHGINQHADPEHAKILVDTVHELSRQYHGG</sequence>
<feature type="chain" id="PRO_1000100002" description="Uroporphyrinogen decarboxylase">
    <location>
        <begin position="1"/>
        <end position="354"/>
    </location>
</feature>
<feature type="binding site" evidence="1">
    <location>
        <begin position="27"/>
        <end position="31"/>
    </location>
    <ligand>
        <name>substrate</name>
    </ligand>
</feature>
<feature type="binding site" evidence="1">
    <location>
        <position position="77"/>
    </location>
    <ligand>
        <name>substrate</name>
    </ligand>
</feature>
<feature type="binding site" evidence="1">
    <location>
        <position position="153"/>
    </location>
    <ligand>
        <name>substrate</name>
    </ligand>
</feature>
<feature type="binding site" evidence="1">
    <location>
        <position position="208"/>
    </location>
    <ligand>
        <name>substrate</name>
    </ligand>
</feature>
<feature type="binding site" evidence="1">
    <location>
        <position position="326"/>
    </location>
    <ligand>
        <name>substrate</name>
    </ligand>
</feature>
<feature type="site" description="Transition state stabilizer" evidence="1">
    <location>
        <position position="77"/>
    </location>
</feature>
<gene>
    <name evidence="1" type="primary">hemE</name>
    <name type="ordered locus">NGK_0519</name>
</gene>
<comment type="function">
    <text evidence="1">Catalyzes the decarboxylation of four acetate groups of uroporphyrinogen-III to yield coproporphyrinogen-III.</text>
</comment>
<comment type="catalytic activity">
    <reaction evidence="1">
        <text>uroporphyrinogen III + 4 H(+) = coproporphyrinogen III + 4 CO2</text>
        <dbReference type="Rhea" id="RHEA:19865"/>
        <dbReference type="ChEBI" id="CHEBI:15378"/>
        <dbReference type="ChEBI" id="CHEBI:16526"/>
        <dbReference type="ChEBI" id="CHEBI:57308"/>
        <dbReference type="ChEBI" id="CHEBI:57309"/>
        <dbReference type="EC" id="4.1.1.37"/>
    </reaction>
</comment>
<comment type="pathway">
    <text evidence="1">Porphyrin-containing compound metabolism; protoporphyrin-IX biosynthesis; coproporphyrinogen-III from 5-aminolevulinate: step 4/4.</text>
</comment>
<comment type="subunit">
    <text evidence="1">Homodimer.</text>
</comment>
<comment type="subcellular location">
    <subcellularLocation>
        <location evidence="1">Cytoplasm</location>
    </subcellularLocation>
</comment>
<comment type="similarity">
    <text evidence="1">Belongs to the uroporphyrinogen decarboxylase family.</text>
</comment>
<keyword id="KW-0963">Cytoplasm</keyword>
<keyword id="KW-0210">Decarboxylase</keyword>
<keyword id="KW-0456">Lyase</keyword>
<keyword id="KW-0627">Porphyrin biosynthesis</keyword>
<protein>
    <recommendedName>
        <fullName evidence="1">Uroporphyrinogen decarboxylase</fullName>
        <shortName evidence="1">UPD</shortName>
        <shortName evidence="1">URO-D</shortName>
        <ecNumber evidence="1">4.1.1.37</ecNumber>
    </recommendedName>
</protein>